<name>PA2HB_OXYSC</name>
<comment type="function">
    <text>Heterotrimer: Snake venom phospholipase A2 (PLA2) heterotrimer that acts as a potent presynaptic neurotoxin by blocking synaptic transmission and synaptic vesicle recycling. May act by binding in a calcium-dependent fashion to neurotonal pentraxin-1 (NPTX1) and neurotonal pentraxin-2 (NPTX2), but not to neuronal pentraxin receptor (NPTXR). Also binds to taipoxin-associated calcium binding protein 49 (RCN2), a protein localized in the lumen of endoplasmic reticulum.</text>
</comment>
<comment type="function">
    <text>Monomer (beta chain): Snake venom phospholipase A2 homolog that is neither toxic nor enzymatically active. Does not bind calcium.</text>
</comment>
<comment type="subunit">
    <text evidence="3">Heterotrimer of alpha, beta, and gamma chains; non-covalently linked.</text>
</comment>
<comment type="subcellular location">
    <subcellularLocation>
        <location>Secreted</location>
    </subcellularLocation>
</comment>
<comment type="tissue specificity">
    <text>Expressed by the venom gland.</text>
</comment>
<comment type="mass spectrometry" mass="13236.3" error="0.1" method="Electrospray" evidence="1"/>
<comment type="toxic dose">
    <text evidence="3">Heterotrimer: LD(50) is 2 ug/kg by intravenous injection into mice.</text>
</comment>
<comment type="similarity">
    <text evidence="4">Belongs to the phospholipase A2 family. Group I subfamily. D49 sub-subfamily.</text>
</comment>
<evidence type="ECO:0000269" key="1">
    <source>
    </source>
</evidence>
<evidence type="ECO:0000269" key="2">
    <source>
    </source>
</evidence>
<evidence type="ECO:0000269" key="3">
    <source>
    </source>
</evidence>
<evidence type="ECO:0000305" key="4"/>
<evidence type="ECO:0007829" key="5">
    <source>
        <dbReference type="PDB" id="3VC0"/>
    </source>
</evidence>
<organism>
    <name type="scientific">Oxyuranus scutellatus scutellatus</name>
    <name type="common">Australian taipan</name>
    <name type="synonym">Coastal taipan</name>
    <dbReference type="NCBI Taxonomy" id="8667"/>
    <lineage>
        <taxon>Eukaryota</taxon>
        <taxon>Metazoa</taxon>
        <taxon>Chordata</taxon>
        <taxon>Craniata</taxon>
        <taxon>Vertebrata</taxon>
        <taxon>Euteleostomi</taxon>
        <taxon>Lepidosauria</taxon>
        <taxon>Squamata</taxon>
        <taxon>Bifurcata</taxon>
        <taxon>Unidentata</taxon>
        <taxon>Episquamata</taxon>
        <taxon>Toxicofera</taxon>
        <taxon>Serpentes</taxon>
        <taxon>Colubroidea</taxon>
        <taxon>Elapidae</taxon>
        <taxon>Hydrophiinae</taxon>
        <taxon>Oxyuranus</taxon>
    </lineage>
</organism>
<protein>
    <recommendedName>
        <fullName>Neutral phospholipase A2 homolog taipoxin beta chain 1</fullName>
        <shortName>svPLA2 homolog</shortName>
    </recommendedName>
</protein>
<keyword id="KW-0002">3D-structure</keyword>
<keyword id="KW-0903">Direct protein sequencing</keyword>
<keyword id="KW-1015">Disulfide bond</keyword>
<keyword id="KW-0964">Secreted</keyword>
<keyword id="KW-0732">Signal</keyword>
<feature type="signal peptide" evidence="1 2">
    <location>
        <begin position="1"/>
        <end position="27"/>
    </location>
</feature>
<feature type="chain" id="PRO_0000161679" description="Neutral phospholipase A2 homolog taipoxin beta chain 1">
    <location>
        <begin position="28"/>
        <end position="145"/>
    </location>
</feature>
<feature type="disulfide bond" evidence="1">
    <location>
        <begin position="38"/>
        <end position="98"/>
    </location>
</feature>
<feature type="disulfide bond" evidence="1">
    <location>
        <begin position="54"/>
        <end position="144"/>
    </location>
</feature>
<feature type="disulfide bond" evidence="1">
    <location>
        <begin position="56"/>
        <end position="72"/>
    </location>
</feature>
<feature type="disulfide bond" evidence="1">
    <location>
        <begin position="71"/>
        <end position="125"/>
    </location>
</feature>
<feature type="disulfide bond" evidence="1">
    <location>
        <begin position="78"/>
        <end position="118"/>
    </location>
</feature>
<feature type="disulfide bond" evidence="1">
    <location>
        <begin position="87"/>
        <end position="111"/>
    </location>
</feature>
<feature type="disulfide bond" evidence="1">
    <location>
        <begin position="105"/>
        <end position="116"/>
    </location>
</feature>
<feature type="helix" evidence="5">
    <location>
        <begin position="29"/>
        <end position="39"/>
    </location>
</feature>
<feature type="turn" evidence="5">
    <location>
        <begin position="40"/>
        <end position="42"/>
    </location>
</feature>
<feature type="helix" evidence="5">
    <location>
        <begin position="46"/>
        <end position="50"/>
    </location>
</feature>
<feature type="turn" evidence="5">
    <location>
        <begin position="53"/>
        <end position="55"/>
    </location>
</feature>
<feature type="strand" evidence="5">
    <location>
        <begin position="56"/>
        <end position="58"/>
    </location>
</feature>
<feature type="helix" evidence="5">
    <location>
        <begin position="67"/>
        <end position="84"/>
    </location>
</feature>
<feature type="helix" evidence="5">
    <location>
        <begin position="89"/>
        <end position="91"/>
    </location>
</feature>
<feature type="strand" evidence="5">
    <location>
        <begin position="96"/>
        <end position="99"/>
    </location>
</feature>
<feature type="strand" evidence="5">
    <location>
        <begin position="102"/>
        <end position="105"/>
    </location>
</feature>
<feature type="helix" evidence="5">
    <location>
        <begin position="110"/>
        <end position="128"/>
    </location>
</feature>
<feature type="helix" evidence="5">
    <location>
        <begin position="133"/>
        <end position="135"/>
    </location>
</feature>
<feature type="helix" evidence="5">
    <location>
        <begin position="140"/>
        <end position="143"/>
    </location>
</feature>
<dbReference type="EMBL" id="AY691657">
    <property type="protein sequence ID" value="AAY47066.1"/>
    <property type="molecule type" value="mRNA"/>
</dbReference>
<dbReference type="PIR" id="A00755">
    <property type="entry name" value="PSOXB"/>
</dbReference>
<dbReference type="PDB" id="3VC0">
    <property type="method" value="X-ray"/>
    <property type="resolution" value="2.15 A"/>
    <property type="chains" value="A=28-145"/>
</dbReference>
<dbReference type="PDBsum" id="3VC0"/>
<dbReference type="SMR" id="P00615"/>
<dbReference type="MINT" id="P00615"/>
<dbReference type="EvolutionaryTrace" id="P00615"/>
<dbReference type="GO" id="GO:0005576">
    <property type="term" value="C:extracellular region"/>
    <property type="evidence" value="ECO:0007669"/>
    <property type="project" value="UniProtKB-SubCell"/>
</dbReference>
<dbReference type="GO" id="GO:0005509">
    <property type="term" value="F:calcium ion binding"/>
    <property type="evidence" value="ECO:0007669"/>
    <property type="project" value="InterPro"/>
</dbReference>
<dbReference type="GO" id="GO:0047498">
    <property type="term" value="F:calcium-dependent phospholipase A2 activity"/>
    <property type="evidence" value="ECO:0007669"/>
    <property type="project" value="TreeGrafter"/>
</dbReference>
<dbReference type="GO" id="GO:0005543">
    <property type="term" value="F:phospholipid binding"/>
    <property type="evidence" value="ECO:0007669"/>
    <property type="project" value="TreeGrafter"/>
</dbReference>
<dbReference type="GO" id="GO:0050482">
    <property type="term" value="P:arachidonate secretion"/>
    <property type="evidence" value="ECO:0007669"/>
    <property type="project" value="InterPro"/>
</dbReference>
<dbReference type="GO" id="GO:0016042">
    <property type="term" value="P:lipid catabolic process"/>
    <property type="evidence" value="ECO:0007669"/>
    <property type="project" value="InterPro"/>
</dbReference>
<dbReference type="GO" id="GO:0006644">
    <property type="term" value="P:phospholipid metabolic process"/>
    <property type="evidence" value="ECO:0007669"/>
    <property type="project" value="InterPro"/>
</dbReference>
<dbReference type="CDD" id="cd00125">
    <property type="entry name" value="PLA2c"/>
    <property type="match status" value="1"/>
</dbReference>
<dbReference type="FunFam" id="1.20.90.10:FF:000007">
    <property type="entry name" value="Acidic phospholipase A2"/>
    <property type="match status" value="1"/>
</dbReference>
<dbReference type="Gene3D" id="1.20.90.10">
    <property type="entry name" value="Phospholipase A2 domain"/>
    <property type="match status" value="1"/>
</dbReference>
<dbReference type="InterPro" id="IPR001211">
    <property type="entry name" value="PLipase_A2"/>
</dbReference>
<dbReference type="InterPro" id="IPR033112">
    <property type="entry name" value="PLipase_A2_Asp_AS"/>
</dbReference>
<dbReference type="InterPro" id="IPR016090">
    <property type="entry name" value="PLipase_A2_dom"/>
</dbReference>
<dbReference type="InterPro" id="IPR036444">
    <property type="entry name" value="PLipase_A2_dom_sf"/>
</dbReference>
<dbReference type="InterPro" id="IPR033113">
    <property type="entry name" value="PLipase_A2_His_AS"/>
</dbReference>
<dbReference type="PANTHER" id="PTHR11716:SF106">
    <property type="entry name" value="PHOSPHOLIPASE A2 A2-ACTITOXIN-UCS2A-LIKE"/>
    <property type="match status" value="1"/>
</dbReference>
<dbReference type="PANTHER" id="PTHR11716">
    <property type="entry name" value="PHOSPHOLIPASE A2 FAMILY MEMBER"/>
    <property type="match status" value="1"/>
</dbReference>
<dbReference type="Pfam" id="PF00068">
    <property type="entry name" value="Phospholip_A2_1"/>
    <property type="match status" value="1"/>
</dbReference>
<dbReference type="PRINTS" id="PR00389">
    <property type="entry name" value="PHPHLIPASEA2"/>
</dbReference>
<dbReference type="SMART" id="SM00085">
    <property type="entry name" value="PA2c"/>
    <property type="match status" value="1"/>
</dbReference>
<dbReference type="SUPFAM" id="SSF48619">
    <property type="entry name" value="Phospholipase A2, PLA2"/>
    <property type="match status" value="1"/>
</dbReference>
<dbReference type="PROSITE" id="PS00119">
    <property type="entry name" value="PA2_ASP"/>
    <property type="match status" value="1"/>
</dbReference>
<dbReference type="PROSITE" id="PS00118">
    <property type="entry name" value="PA2_HIS"/>
    <property type="match status" value="1"/>
</dbReference>
<sequence length="145" mass="16008">MHPAHLLVLLAVCVSLLGASDIPPLPLNLVQFGKMIECAIRNRRPALDFMNYGCYCGKGGSGTPVDDLDRCCQVHDECYAEAEKHGCYPSLTTYTWECRQVGPYCNSKTQCEVFVCACDFAAAKCFAQEDYNPAHSNINTGERCK</sequence>
<accession>P00615</accession>
<accession>Q4VRI8</accession>
<reference key="1">
    <citation type="submission" date="2004-07" db="EMBL/GenBank/DDBJ databases">
        <authorList>
            <person name="Welton R.E."/>
            <person name="Burnell J.N."/>
        </authorList>
    </citation>
    <scope>NUCLEOTIDE SEQUENCE [MRNA]</scope>
    <source>
        <tissue>Venom gland</tissue>
    </source>
</reference>
<reference key="2">
    <citation type="journal article" date="1982" name="Eur. J. Biochem.">
        <title>Amino-acid sequence of the beta 1 isosubunit of taipoxin, an extremely potent presynaptic neurotoxin from the Australian snake taipan (Oxyuranus s. scutellatus).</title>
        <authorList>
            <person name="Lind P."/>
        </authorList>
    </citation>
    <scope>PROTEIN SEQUENCE OF 28-145</scope>
    <source>
        <tissue>Venom</tissue>
    </source>
</reference>
<reference key="3">
    <citation type="journal article" date="2012" name="FEBS J.">
        <title>Structural analysis of trimeric phospholipase A2 neurotoxin from the Australian taipan snake venom.</title>
        <authorList>
            <person name="Cendron L."/>
            <person name="Micetic I."/>
            <person name="Polverino de Laureto P."/>
            <person name="Paoli M."/>
        </authorList>
    </citation>
    <scope>PROTEIN SEQUENCE OF 28-31</scope>
    <scope>X-RAY CRYSTALLOGRAPHY (1.76 ANGSTROMS) OF 28-145</scope>
    <scope>ABSENCE OF ENZYMATIC ACTIVITY OF THE BETA CHAIN</scope>
    <scope>DISULFIDE BONDS</scope>
    <scope>MASS SPECTROMETRY</scope>
    <source>
        <tissue>Venom</tissue>
    </source>
</reference>
<reference key="4">
    <citation type="journal article" date="1976" name="Eur. J. Biochem.">
        <title>Taipoxin, an extremely potent presynaptic neurotoxin from the venom of the australian snake taipan (Oxyuranus s. scutellatus). Isolation, characterization, quaternary structure and pharmacological properties.</title>
        <authorList>
            <person name="Fohlman J."/>
            <person name="Eaker D."/>
            <person name="Karlsoon E."/>
            <person name="Thesleff S."/>
        </authorList>
    </citation>
    <scope>FUNCTION</scope>
    <scope>SUBUNIT</scope>
    <scope>TOXIC DOSE</scope>
    <source>
        <tissue>Venom</tissue>
    </source>
</reference>
<reference key="5">
    <citation type="journal article" date="1995" name="J. Neurochem.">
        <title>Novel reticular calcium binding protein is purified on taipoxin columns.</title>
        <authorList>
            <person name="Dodds D."/>
            <person name="Schlimgen A.K."/>
            <person name="Lu S.Y."/>
            <person name="Perin M.S."/>
        </authorList>
    </citation>
    <scope>FUNCTION AS RCN2 BINDING PROTEIN</scope>
</reference>
<reference key="6">
    <citation type="journal article" date="2000" name="J. Biol. Chem.">
        <title>Biochemical interactions of the neuronal pentraxins. Neuronal pentraxin (NP) receptor binds to taipoxin and taipoxin-associated calcium-binding protein 49 via NP1 and NP2.</title>
        <authorList>
            <person name="Kirkpatrick L.L."/>
            <person name="Matzuk M.M."/>
            <person name="Dodds D.C."/>
            <person name="Perin M.S."/>
        </authorList>
    </citation>
    <scope>FUNCTION AS PENTRAXIN BINDING PROTEIN</scope>
</reference>
<proteinExistence type="evidence at protein level"/>